<feature type="chain" id="PRO_1000204335" description="Protein YN1551_0772">
    <location>
        <begin position="1"/>
        <end position="263"/>
    </location>
</feature>
<organism>
    <name type="scientific">Saccharolobus islandicus (strain Y.N.15.51 / Yellowstone #2)</name>
    <name type="common">Sulfolobus islandicus</name>
    <dbReference type="NCBI Taxonomy" id="419942"/>
    <lineage>
        <taxon>Archaea</taxon>
        <taxon>Thermoproteota</taxon>
        <taxon>Thermoprotei</taxon>
        <taxon>Sulfolobales</taxon>
        <taxon>Sulfolobaceae</taxon>
        <taxon>Saccharolobus</taxon>
    </lineage>
</organism>
<sequence>MDYWFAEIVTIGNEVLSGKTVNTNASHIGRRLTSLGFTVRRITVVMDDIDEIVSAFREAIDRKPKVIVSSGGLGPTWDDKTAEGLAKALGVNLELNKTAFDMILEKYTKRNIPLTEERKKMAYLPYGAMAVENNEGIAPGIYIYHNNIDILATPGVPREMENVLENFINKMLRNKPNLKYLEDFIYVENVMESALAPYVKELVKKYDIYIKTHPKSYELLRPILEIQIAGSGREEEIKVKIEKVKNELLDAIKKLNGIIRNSL</sequence>
<gene>
    <name type="ordered locus">YN1551_0772</name>
</gene>
<accession>C3NMS7</accession>
<protein>
    <recommendedName>
        <fullName evidence="1">Protein YN1551_0772</fullName>
    </recommendedName>
</protein>
<comment type="similarity">
    <text evidence="1">Belongs to the CinA family.</text>
</comment>
<proteinExistence type="inferred from homology"/>
<reference key="1">
    <citation type="journal article" date="2009" name="Proc. Natl. Acad. Sci. U.S.A.">
        <title>Biogeography of the Sulfolobus islandicus pan-genome.</title>
        <authorList>
            <person name="Reno M.L."/>
            <person name="Held N.L."/>
            <person name="Fields C.J."/>
            <person name="Burke P.V."/>
            <person name="Whitaker R.J."/>
        </authorList>
    </citation>
    <scope>NUCLEOTIDE SEQUENCE [LARGE SCALE GENOMIC DNA]</scope>
    <source>
        <strain>Y.N.15.51 / Yellowstone #2</strain>
    </source>
</reference>
<name>Y772_SACI1</name>
<dbReference type="EMBL" id="CP001404">
    <property type="protein sequence ID" value="ACP47897.1"/>
    <property type="molecule type" value="Genomic_DNA"/>
</dbReference>
<dbReference type="RefSeq" id="WP_012711988.1">
    <property type="nucleotide sequence ID" value="NC_012623.1"/>
</dbReference>
<dbReference type="SMR" id="C3NMS7"/>
<dbReference type="KEGG" id="sin:YN1551_0772"/>
<dbReference type="HOGENOM" id="CLU_030805_0_5_2"/>
<dbReference type="Proteomes" id="UP000006818">
    <property type="component" value="Chromosome"/>
</dbReference>
<dbReference type="CDD" id="cd00885">
    <property type="entry name" value="cinA"/>
    <property type="match status" value="1"/>
</dbReference>
<dbReference type="Gene3D" id="3.40.980.10">
    <property type="entry name" value="MoaB/Mog-like domain"/>
    <property type="match status" value="1"/>
</dbReference>
<dbReference type="HAMAP" id="MF_00226_A">
    <property type="entry name" value="CinA_A"/>
    <property type="match status" value="1"/>
</dbReference>
<dbReference type="InterPro" id="IPR050101">
    <property type="entry name" value="CinA"/>
</dbReference>
<dbReference type="InterPro" id="IPR023055">
    <property type="entry name" value="CinA_Arc"/>
</dbReference>
<dbReference type="InterPro" id="IPR036425">
    <property type="entry name" value="MoaB/Mog-like_dom_sf"/>
</dbReference>
<dbReference type="InterPro" id="IPR001453">
    <property type="entry name" value="MoaB/Mog_dom"/>
</dbReference>
<dbReference type="NCBIfam" id="NF002291">
    <property type="entry name" value="PRK01215.1"/>
    <property type="match status" value="1"/>
</dbReference>
<dbReference type="PANTHER" id="PTHR13939">
    <property type="entry name" value="NICOTINAMIDE-NUCLEOTIDE AMIDOHYDROLASE PNCC"/>
    <property type="match status" value="1"/>
</dbReference>
<dbReference type="PANTHER" id="PTHR13939:SF0">
    <property type="entry name" value="NMN AMIDOHYDROLASE-LIKE PROTEIN YFAY"/>
    <property type="match status" value="1"/>
</dbReference>
<dbReference type="Pfam" id="PF00994">
    <property type="entry name" value="MoCF_biosynth"/>
    <property type="match status" value="1"/>
</dbReference>
<dbReference type="SMART" id="SM00852">
    <property type="entry name" value="MoCF_biosynth"/>
    <property type="match status" value="1"/>
</dbReference>
<dbReference type="SUPFAM" id="SSF53218">
    <property type="entry name" value="Molybdenum cofactor biosynthesis proteins"/>
    <property type="match status" value="1"/>
</dbReference>
<evidence type="ECO:0000255" key="1">
    <source>
        <dbReference type="HAMAP-Rule" id="MF_00226"/>
    </source>
</evidence>